<gene>
    <name evidence="1" type="primary">speE</name>
    <name type="ordered locus">UTI89_C0134</name>
</gene>
<proteinExistence type="inferred from homology"/>
<organism>
    <name type="scientific">Escherichia coli (strain UTI89 / UPEC)</name>
    <dbReference type="NCBI Taxonomy" id="364106"/>
    <lineage>
        <taxon>Bacteria</taxon>
        <taxon>Pseudomonadati</taxon>
        <taxon>Pseudomonadota</taxon>
        <taxon>Gammaproteobacteria</taxon>
        <taxon>Enterobacterales</taxon>
        <taxon>Enterobacteriaceae</taxon>
        <taxon>Escherichia</taxon>
    </lineage>
</organism>
<name>SPEE_ECOUT</name>
<dbReference type="EC" id="2.5.1.16" evidence="1"/>
<dbReference type="EMBL" id="CP000243">
    <property type="protein sequence ID" value="ABE05644.1"/>
    <property type="molecule type" value="Genomic_DNA"/>
</dbReference>
<dbReference type="RefSeq" id="WP_000818405.1">
    <property type="nucleotide sequence ID" value="NZ_CP064825.1"/>
</dbReference>
<dbReference type="SMR" id="Q1RG70"/>
<dbReference type="KEGG" id="eci:UTI89_C0134"/>
<dbReference type="HOGENOM" id="CLU_048199_0_0_6"/>
<dbReference type="UniPathway" id="UPA00248">
    <property type="reaction ID" value="UER00314"/>
</dbReference>
<dbReference type="Proteomes" id="UP000001952">
    <property type="component" value="Chromosome"/>
</dbReference>
<dbReference type="GO" id="GO:0005829">
    <property type="term" value="C:cytosol"/>
    <property type="evidence" value="ECO:0007669"/>
    <property type="project" value="TreeGrafter"/>
</dbReference>
<dbReference type="GO" id="GO:0004766">
    <property type="term" value="F:spermidine synthase activity"/>
    <property type="evidence" value="ECO:0007669"/>
    <property type="project" value="UniProtKB-UniRule"/>
</dbReference>
<dbReference type="GO" id="GO:0008295">
    <property type="term" value="P:spermidine biosynthetic process"/>
    <property type="evidence" value="ECO:0007669"/>
    <property type="project" value="UniProtKB-UniRule"/>
</dbReference>
<dbReference type="CDD" id="cd02440">
    <property type="entry name" value="AdoMet_MTases"/>
    <property type="match status" value="1"/>
</dbReference>
<dbReference type="FunFam" id="2.30.140.10:FF:000002">
    <property type="entry name" value="Polyamine aminopropyltransferase"/>
    <property type="match status" value="1"/>
</dbReference>
<dbReference type="FunFam" id="3.40.50.150:FF:000026">
    <property type="entry name" value="Polyamine aminopropyltransferase"/>
    <property type="match status" value="1"/>
</dbReference>
<dbReference type="Gene3D" id="2.30.140.10">
    <property type="entry name" value="Spermidine synthase, tetramerisation domain"/>
    <property type="match status" value="1"/>
</dbReference>
<dbReference type="Gene3D" id="3.40.50.150">
    <property type="entry name" value="Vaccinia Virus protein VP39"/>
    <property type="match status" value="1"/>
</dbReference>
<dbReference type="HAMAP" id="MF_00198">
    <property type="entry name" value="Spermidine_synth"/>
    <property type="match status" value="1"/>
</dbReference>
<dbReference type="InterPro" id="IPR030374">
    <property type="entry name" value="PABS"/>
</dbReference>
<dbReference type="InterPro" id="IPR030373">
    <property type="entry name" value="PABS_CS"/>
</dbReference>
<dbReference type="InterPro" id="IPR029063">
    <property type="entry name" value="SAM-dependent_MTases_sf"/>
</dbReference>
<dbReference type="InterPro" id="IPR001045">
    <property type="entry name" value="Spermi_synthase"/>
</dbReference>
<dbReference type="InterPro" id="IPR035246">
    <property type="entry name" value="Spermidine_synt_N"/>
</dbReference>
<dbReference type="InterPro" id="IPR037163">
    <property type="entry name" value="Spermidine_synt_N_sf"/>
</dbReference>
<dbReference type="NCBIfam" id="NF037959">
    <property type="entry name" value="MFS_SpdSyn"/>
    <property type="match status" value="1"/>
</dbReference>
<dbReference type="NCBIfam" id="NF002010">
    <property type="entry name" value="PRK00811.1"/>
    <property type="match status" value="1"/>
</dbReference>
<dbReference type="NCBIfam" id="TIGR00417">
    <property type="entry name" value="speE"/>
    <property type="match status" value="1"/>
</dbReference>
<dbReference type="PANTHER" id="PTHR11558:SF11">
    <property type="entry name" value="SPERMIDINE SYNTHASE"/>
    <property type="match status" value="1"/>
</dbReference>
<dbReference type="PANTHER" id="PTHR11558">
    <property type="entry name" value="SPERMIDINE/SPERMINE SYNTHASE"/>
    <property type="match status" value="1"/>
</dbReference>
<dbReference type="Pfam" id="PF17284">
    <property type="entry name" value="Spermine_synt_N"/>
    <property type="match status" value="1"/>
</dbReference>
<dbReference type="Pfam" id="PF01564">
    <property type="entry name" value="Spermine_synth"/>
    <property type="match status" value="1"/>
</dbReference>
<dbReference type="SUPFAM" id="SSF53335">
    <property type="entry name" value="S-adenosyl-L-methionine-dependent methyltransferases"/>
    <property type="match status" value="1"/>
</dbReference>
<dbReference type="PROSITE" id="PS01330">
    <property type="entry name" value="PABS_1"/>
    <property type="match status" value="1"/>
</dbReference>
<dbReference type="PROSITE" id="PS51006">
    <property type="entry name" value="PABS_2"/>
    <property type="match status" value="1"/>
</dbReference>
<reference key="1">
    <citation type="journal article" date="2006" name="Proc. Natl. Acad. Sci. U.S.A.">
        <title>Identification of genes subject to positive selection in uropathogenic strains of Escherichia coli: a comparative genomics approach.</title>
        <authorList>
            <person name="Chen S.L."/>
            <person name="Hung C.-S."/>
            <person name="Xu J."/>
            <person name="Reigstad C.S."/>
            <person name="Magrini V."/>
            <person name="Sabo A."/>
            <person name="Blasiar D."/>
            <person name="Bieri T."/>
            <person name="Meyer R.R."/>
            <person name="Ozersky P."/>
            <person name="Armstrong J.R."/>
            <person name="Fulton R.S."/>
            <person name="Latreille J.P."/>
            <person name="Spieth J."/>
            <person name="Hooton T.M."/>
            <person name="Mardis E.R."/>
            <person name="Hultgren S.J."/>
            <person name="Gordon J.I."/>
        </authorList>
    </citation>
    <scope>NUCLEOTIDE SEQUENCE [LARGE SCALE GENOMIC DNA]</scope>
    <source>
        <strain>UTI89 / UPEC</strain>
    </source>
</reference>
<evidence type="ECO:0000255" key="1">
    <source>
        <dbReference type="HAMAP-Rule" id="MF_00198"/>
    </source>
</evidence>
<keyword id="KW-0963">Cytoplasm</keyword>
<keyword id="KW-0620">Polyamine biosynthesis</keyword>
<keyword id="KW-0745">Spermidine biosynthesis</keyword>
<keyword id="KW-0808">Transferase</keyword>
<accession>Q1RG70</accession>
<feature type="chain" id="PRO_1000011999" description="Polyamine aminopropyltransferase">
    <location>
        <begin position="1"/>
        <end position="288"/>
    </location>
</feature>
<feature type="domain" description="PABS" evidence="1">
    <location>
        <begin position="9"/>
        <end position="238"/>
    </location>
</feature>
<feature type="active site" description="Proton acceptor" evidence="1">
    <location>
        <position position="158"/>
    </location>
</feature>
<feature type="binding site" evidence="1">
    <location>
        <position position="33"/>
    </location>
    <ligand>
        <name>S-methyl-5'-thioadenosine</name>
        <dbReference type="ChEBI" id="CHEBI:17509"/>
    </ligand>
</feature>
<feature type="binding site" evidence="1">
    <location>
        <position position="64"/>
    </location>
    <ligand>
        <name>spermidine</name>
        <dbReference type="ChEBI" id="CHEBI:57834"/>
    </ligand>
</feature>
<feature type="binding site" evidence="1">
    <location>
        <position position="88"/>
    </location>
    <ligand>
        <name>spermidine</name>
        <dbReference type="ChEBI" id="CHEBI:57834"/>
    </ligand>
</feature>
<feature type="binding site" evidence="1">
    <location>
        <position position="108"/>
    </location>
    <ligand>
        <name>S-methyl-5'-thioadenosine</name>
        <dbReference type="ChEBI" id="CHEBI:17509"/>
    </ligand>
</feature>
<feature type="binding site" evidence="1">
    <location>
        <begin position="140"/>
        <end position="141"/>
    </location>
    <ligand>
        <name>S-methyl-5'-thioadenosine</name>
        <dbReference type="ChEBI" id="CHEBI:17509"/>
    </ligand>
</feature>
<feature type="binding site" evidence="1">
    <location>
        <begin position="158"/>
        <end position="161"/>
    </location>
    <ligand>
        <name>spermidine</name>
        <dbReference type="ChEBI" id="CHEBI:57834"/>
    </ligand>
</feature>
<feature type="binding site" evidence="1">
    <location>
        <position position="165"/>
    </location>
    <ligand>
        <name>S-methyl-5'-thioadenosine</name>
        <dbReference type="ChEBI" id="CHEBI:17509"/>
    </ligand>
</feature>
<protein>
    <recommendedName>
        <fullName evidence="1">Polyamine aminopropyltransferase</fullName>
    </recommendedName>
    <alternativeName>
        <fullName evidence="1">Putrescine aminopropyltransferase</fullName>
        <shortName evidence="1">PAPT</shortName>
    </alternativeName>
    <alternativeName>
        <fullName evidence="1">Spermidine synthase</fullName>
        <shortName evidence="1">SPDS</shortName>
        <shortName evidence="1">SPDSY</shortName>
        <ecNumber evidence="1">2.5.1.16</ecNumber>
    </alternativeName>
</protein>
<comment type="function">
    <text evidence="1">Catalyzes the irreversible transfer of a propylamine group from the amino donor S-adenosylmethioninamine (decarboxy-AdoMet) to putrescine (1,4-diaminobutane) to yield spermidine.</text>
</comment>
<comment type="catalytic activity">
    <reaction evidence="1">
        <text>S-adenosyl 3-(methylsulfanyl)propylamine + putrescine = S-methyl-5'-thioadenosine + spermidine + H(+)</text>
        <dbReference type="Rhea" id="RHEA:12721"/>
        <dbReference type="ChEBI" id="CHEBI:15378"/>
        <dbReference type="ChEBI" id="CHEBI:17509"/>
        <dbReference type="ChEBI" id="CHEBI:57443"/>
        <dbReference type="ChEBI" id="CHEBI:57834"/>
        <dbReference type="ChEBI" id="CHEBI:326268"/>
        <dbReference type="EC" id="2.5.1.16"/>
    </reaction>
</comment>
<comment type="pathway">
    <text evidence="1">Amine and polyamine biosynthesis; spermidine biosynthesis; spermidine from putrescine: step 1/1.</text>
</comment>
<comment type="subunit">
    <text evidence="1">Homodimer or homotetramer.</text>
</comment>
<comment type="subcellular location">
    <subcellularLocation>
        <location evidence="1">Cytoplasm</location>
    </subcellularLocation>
</comment>
<comment type="similarity">
    <text evidence="1">Belongs to the spermidine/spermine synthase family.</text>
</comment>
<sequence>MAEKKQWHETLHDQFGQYFAVDNVLYHEKTDHQDLIIFENAAFGRVMALDGVVQTTERDEFIYHEMMTHVPLLAHGHAKHVLIIGGGDGAMLREVTRHKNVESITMVEIDAGVVSFCRQYLPNHNAGSYDDPRFKLVIDDGVNFVNQTNQTFDVIISDCTDPIGPGESLFTSAFYEGCKRCLNPGGIFVAQNGVCFLQQEEAIDSHRKLSHYFSDVGFYQAAIPTYYGGIMTFAWATDNDALRHLSTEIIQARFLASGLKCRYYNPAVHTAAFALPQYLQDALASQPS</sequence>